<comment type="function">
    <text evidence="1">Involved in mRNA degradation. Catalyzes the phosphorolysis of single-stranded polyribonucleotides processively in the 3'- to 5'-direction.</text>
</comment>
<comment type="catalytic activity">
    <reaction evidence="1">
        <text>RNA(n+1) + phosphate = RNA(n) + a ribonucleoside 5'-diphosphate</text>
        <dbReference type="Rhea" id="RHEA:22096"/>
        <dbReference type="Rhea" id="RHEA-COMP:14527"/>
        <dbReference type="Rhea" id="RHEA-COMP:17342"/>
        <dbReference type="ChEBI" id="CHEBI:43474"/>
        <dbReference type="ChEBI" id="CHEBI:57930"/>
        <dbReference type="ChEBI" id="CHEBI:140395"/>
        <dbReference type="EC" id="2.7.7.8"/>
    </reaction>
</comment>
<comment type="cofactor">
    <cofactor evidence="1">
        <name>Mg(2+)</name>
        <dbReference type="ChEBI" id="CHEBI:18420"/>
    </cofactor>
</comment>
<comment type="subcellular location">
    <subcellularLocation>
        <location evidence="1">Cytoplasm</location>
    </subcellularLocation>
</comment>
<comment type="similarity">
    <text evidence="1">Belongs to the polyribonucleotide nucleotidyltransferase family.</text>
</comment>
<proteinExistence type="inferred from homology"/>
<sequence>MSKQTFTTTFAGKPLVVEVGQVAKQANGATVVRYGDSTVLTATVMSKKMATGDFFPLQVNYEEKMYAAGKFPGGFMKREGRPSTDATLTARLIDRPIRPMFAEGFRNEVQVINTVLSYDENASAPMAAMFGSSLALSISDIPFNGPIAGVQVGYIDGEFIINPDKEQMEASLLELTVAGSKEAINMVESGAKELSEDIMLEALLKGHQAIQELIAFQEQIVAVVGKEKAEVELLQVDADLQADIVAKYNAQLQKAVQVEEKKAREAATEAVKEMVKAEYEERYAEDENLATIMRDVAEILEQMEHAEVRRLITEDKIRPDGRKIDEIRPLDAVVDFLPKVHGSGLFTRGQTQALSVLTLAPMGETQIIDGLAPEYKKRFLHHYNFPQYSVGETGRYGAAGRREIGHGALGERALEQVLPSLEEFPYAIRLVAEVLESNGSSSQASICAGTLALMAGGVPIKAPVAGIAMGLISDGTNYTVLTDIQGLEDHFGDMDFKVAGTREGITALQMDIKIAGITPQILEEALAQAKKARFEILDVIEATIAEPRPELAPTAPKIDTIKIDVDKIKVVIGKGGETIDKIIAETGVKIDIDDEGNVSIYSSDQAAIDRTKEIIAGLVREAKVGEVYHAKVIRIEKFGAFVNLFDKTDALVHISEIAWTRTANVSDVLEVGEDVDVKVIKIDEKGRVDASMKALIPRPPKQEKKEEKHD</sequence>
<keyword id="KW-0963">Cytoplasm</keyword>
<keyword id="KW-0460">Magnesium</keyword>
<keyword id="KW-0479">Metal-binding</keyword>
<keyword id="KW-0548">Nucleotidyltransferase</keyword>
<keyword id="KW-0694">RNA-binding</keyword>
<keyword id="KW-0808">Transferase</keyword>
<feature type="chain" id="PRO_0000329878" description="Polyribonucleotide nucleotidyltransferase">
    <location>
        <begin position="1"/>
        <end position="710"/>
    </location>
</feature>
<feature type="domain" description="KH" evidence="1">
    <location>
        <begin position="556"/>
        <end position="615"/>
    </location>
</feature>
<feature type="domain" description="S1 motif" evidence="1">
    <location>
        <begin position="625"/>
        <end position="693"/>
    </location>
</feature>
<feature type="binding site" evidence="1">
    <location>
        <position position="489"/>
    </location>
    <ligand>
        <name>Mg(2+)</name>
        <dbReference type="ChEBI" id="CHEBI:18420"/>
    </ligand>
</feature>
<feature type="binding site" evidence="1">
    <location>
        <position position="495"/>
    </location>
    <ligand>
        <name>Mg(2+)</name>
        <dbReference type="ChEBI" id="CHEBI:18420"/>
    </ligand>
</feature>
<evidence type="ECO:0000255" key="1">
    <source>
        <dbReference type="HAMAP-Rule" id="MF_01595"/>
    </source>
</evidence>
<accession>P0DD12</accession>
<accession>Q79W86</accession>
<accession>Q8K5T4</accession>
<gene>
    <name evidence="1" type="primary">pnp</name>
    <name type="ordered locus">SpyM3_1676</name>
</gene>
<protein>
    <recommendedName>
        <fullName evidence="1">Polyribonucleotide nucleotidyltransferase</fullName>
        <ecNumber evidence="1">2.7.7.8</ecNumber>
    </recommendedName>
    <alternativeName>
        <fullName evidence="1">Polynucleotide phosphorylase</fullName>
        <shortName evidence="1">PNPase</shortName>
    </alternativeName>
</protein>
<organism>
    <name type="scientific">Streptococcus pyogenes serotype M3 (strain ATCC BAA-595 / MGAS315)</name>
    <dbReference type="NCBI Taxonomy" id="198466"/>
    <lineage>
        <taxon>Bacteria</taxon>
        <taxon>Bacillati</taxon>
        <taxon>Bacillota</taxon>
        <taxon>Bacilli</taxon>
        <taxon>Lactobacillales</taxon>
        <taxon>Streptococcaceae</taxon>
        <taxon>Streptococcus</taxon>
    </lineage>
</organism>
<reference key="1">
    <citation type="journal article" date="2002" name="Proc. Natl. Acad. Sci. U.S.A.">
        <title>Genome sequence of a serotype M3 strain of group A Streptococcus: phage-encoded toxins, the high-virulence phenotype, and clone emergence.</title>
        <authorList>
            <person name="Beres S.B."/>
            <person name="Sylva G.L."/>
            <person name="Barbian K.D."/>
            <person name="Lei B."/>
            <person name="Hoff J.S."/>
            <person name="Mammarella N.D."/>
            <person name="Liu M.-Y."/>
            <person name="Smoot J.C."/>
            <person name="Porcella S.F."/>
            <person name="Parkins L.D."/>
            <person name="Campbell D.S."/>
            <person name="Smith T.M."/>
            <person name="McCormick J.K."/>
            <person name="Leung D.Y.M."/>
            <person name="Schlievert P.M."/>
            <person name="Musser J.M."/>
        </authorList>
    </citation>
    <scope>NUCLEOTIDE SEQUENCE [LARGE SCALE GENOMIC DNA]</scope>
    <source>
        <strain>ATCC BAA-595 / MGAS315</strain>
    </source>
</reference>
<dbReference type="EC" id="2.7.7.8" evidence="1"/>
<dbReference type="EMBL" id="AE014074">
    <property type="protein sequence ID" value="AAM80283.1"/>
    <property type="molecule type" value="Genomic_DNA"/>
</dbReference>
<dbReference type="RefSeq" id="WP_011055015.1">
    <property type="nucleotide sequence ID" value="NC_004070.1"/>
</dbReference>
<dbReference type="SMR" id="P0DD12"/>
<dbReference type="KEGG" id="spg:SpyM3_1676"/>
<dbReference type="HOGENOM" id="CLU_004217_2_2_9"/>
<dbReference type="Proteomes" id="UP000000564">
    <property type="component" value="Chromosome"/>
</dbReference>
<dbReference type="GO" id="GO:0005829">
    <property type="term" value="C:cytosol"/>
    <property type="evidence" value="ECO:0007669"/>
    <property type="project" value="TreeGrafter"/>
</dbReference>
<dbReference type="GO" id="GO:0000175">
    <property type="term" value="F:3'-5'-RNA exonuclease activity"/>
    <property type="evidence" value="ECO:0007669"/>
    <property type="project" value="TreeGrafter"/>
</dbReference>
<dbReference type="GO" id="GO:0000287">
    <property type="term" value="F:magnesium ion binding"/>
    <property type="evidence" value="ECO:0007669"/>
    <property type="project" value="UniProtKB-UniRule"/>
</dbReference>
<dbReference type="GO" id="GO:0004654">
    <property type="term" value="F:polyribonucleotide nucleotidyltransferase activity"/>
    <property type="evidence" value="ECO:0007669"/>
    <property type="project" value="UniProtKB-UniRule"/>
</dbReference>
<dbReference type="GO" id="GO:0003723">
    <property type="term" value="F:RNA binding"/>
    <property type="evidence" value="ECO:0007669"/>
    <property type="project" value="UniProtKB-UniRule"/>
</dbReference>
<dbReference type="GO" id="GO:0006402">
    <property type="term" value="P:mRNA catabolic process"/>
    <property type="evidence" value="ECO:0007669"/>
    <property type="project" value="UniProtKB-UniRule"/>
</dbReference>
<dbReference type="GO" id="GO:0006396">
    <property type="term" value="P:RNA processing"/>
    <property type="evidence" value="ECO:0007669"/>
    <property type="project" value="InterPro"/>
</dbReference>
<dbReference type="CDD" id="cd02393">
    <property type="entry name" value="KH-I_PNPase"/>
    <property type="match status" value="1"/>
</dbReference>
<dbReference type="CDD" id="cd11363">
    <property type="entry name" value="RNase_PH_PNPase_1"/>
    <property type="match status" value="1"/>
</dbReference>
<dbReference type="CDD" id="cd11364">
    <property type="entry name" value="RNase_PH_PNPase_2"/>
    <property type="match status" value="1"/>
</dbReference>
<dbReference type="FunFam" id="2.40.50.140:FF:000023">
    <property type="entry name" value="Polyribonucleotide nucleotidyltransferase"/>
    <property type="match status" value="1"/>
</dbReference>
<dbReference type="FunFam" id="3.30.1370.10:FF:000001">
    <property type="entry name" value="Polyribonucleotide nucleotidyltransferase"/>
    <property type="match status" value="1"/>
</dbReference>
<dbReference type="FunFam" id="3.30.230.70:FF:000001">
    <property type="entry name" value="Polyribonucleotide nucleotidyltransferase"/>
    <property type="match status" value="1"/>
</dbReference>
<dbReference type="FunFam" id="3.30.230.70:FF:000002">
    <property type="entry name" value="Polyribonucleotide nucleotidyltransferase"/>
    <property type="match status" value="1"/>
</dbReference>
<dbReference type="Gene3D" id="3.30.230.70">
    <property type="entry name" value="GHMP Kinase, N-terminal domain"/>
    <property type="match status" value="2"/>
</dbReference>
<dbReference type="Gene3D" id="3.30.1370.10">
    <property type="entry name" value="K Homology domain, type 1"/>
    <property type="match status" value="1"/>
</dbReference>
<dbReference type="Gene3D" id="2.40.50.140">
    <property type="entry name" value="Nucleic acid-binding proteins"/>
    <property type="match status" value="1"/>
</dbReference>
<dbReference type="HAMAP" id="MF_01595">
    <property type="entry name" value="PNPase"/>
    <property type="match status" value="1"/>
</dbReference>
<dbReference type="InterPro" id="IPR001247">
    <property type="entry name" value="ExoRNase_PH_dom1"/>
</dbReference>
<dbReference type="InterPro" id="IPR015847">
    <property type="entry name" value="ExoRNase_PH_dom2"/>
</dbReference>
<dbReference type="InterPro" id="IPR036345">
    <property type="entry name" value="ExoRNase_PH_dom2_sf"/>
</dbReference>
<dbReference type="InterPro" id="IPR004087">
    <property type="entry name" value="KH_dom"/>
</dbReference>
<dbReference type="InterPro" id="IPR004088">
    <property type="entry name" value="KH_dom_type_1"/>
</dbReference>
<dbReference type="InterPro" id="IPR036612">
    <property type="entry name" value="KH_dom_type_1_sf"/>
</dbReference>
<dbReference type="InterPro" id="IPR012340">
    <property type="entry name" value="NA-bd_OB-fold"/>
</dbReference>
<dbReference type="InterPro" id="IPR012162">
    <property type="entry name" value="PNPase"/>
</dbReference>
<dbReference type="InterPro" id="IPR027408">
    <property type="entry name" value="PNPase/RNase_PH_dom_sf"/>
</dbReference>
<dbReference type="InterPro" id="IPR015848">
    <property type="entry name" value="PNPase_PH_RNA-bd_bac/org-type"/>
</dbReference>
<dbReference type="InterPro" id="IPR036456">
    <property type="entry name" value="PNPase_PH_RNA-bd_sf"/>
</dbReference>
<dbReference type="InterPro" id="IPR020568">
    <property type="entry name" value="Ribosomal_Su5_D2-typ_SF"/>
</dbReference>
<dbReference type="InterPro" id="IPR003029">
    <property type="entry name" value="S1_domain"/>
</dbReference>
<dbReference type="NCBIfam" id="TIGR03591">
    <property type="entry name" value="polynuc_phos"/>
    <property type="match status" value="1"/>
</dbReference>
<dbReference type="NCBIfam" id="NF008805">
    <property type="entry name" value="PRK11824.1"/>
    <property type="match status" value="1"/>
</dbReference>
<dbReference type="PANTHER" id="PTHR11252">
    <property type="entry name" value="POLYRIBONUCLEOTIDE NUCLEOTIDYLTRANSFERASE"/>
    <property type="match status" value="1"/>
</dbReference>
<dbReference type="PANTHER" id="PTHR11252:SF0">
    <property type="entry name" value="POLYRIBONUCLEOTIDE NUCLEOTIDYLTRANSFERASE 1, MITOCHONDRIAL"/>
    <property type="match status" value="1"/>
</dbReference>
<dbReference type="Pfam" id="PF00013">
    <property type="entry name" value="KH_1"/>
    <property type="match status" value="1"/>
</dbReference>
<dbReference type="Pfam" id="PF03726">
    <property type="entry name" value="PNPase"/>
    <property type="match status" value="1"/>
</dbReference>
<dbReference type="Pfam" id="PF01138">
    <property type="entry name" value="RNase_PH"/>
    <property type="match status" value="2"/>
</dbReference>
<dbReference type="Pfam" id="PF03725">
    <property type="entry name" value="RNase_PH_C"/>
    <property type="match status" value="2"/>
</dbReference>
<dbReference type="Pfam" id="PF00575">
    <property type="entry name" value="S1"/>
    <property type="match status" value="1"/>
</dbReference>
<dbReference type="PIRSF" id="PIRSF005499">
    <property type="entry name" value="PNPase"/>
    <property type="match status" value="1"/>
</dbReference>
<dbReference type="SMART" id="SM00322">
    <property type="entry name" value="KH"/>
    <property type="match status" value="1"/>
</dbReference>
<dbReference type="SMART" id="SM00316">
    <property type="entry name" value="S1"/>
    <property type="match status" value="1"/>
</dbReference>
<dbReference type="SUPFAM" id="SSF54791">
    <property type="entry name" value="Eukaryotic type KH-domain (KH-domain type I)"/>
    <property type="match status" value="1"/>
</dbReference>
<dbReference type="SUPFAM" id="SSF50249">
    <property type="entry name" value="Nucleic acid-binding proteins"/>
    <property type="match status" value="1"/>
</dbReference>
<dbReference type="SUPFAM" id="SSF46915">
    <property type="entry name" value="Polynucleotide phosphorylase/guanosine pentaphosphate synthase (PNPase/GPSI), domain 3"/>
    <property type="match status" value="1"/>
</dbReference>
<dbReference type="SUPFAM" id="SSF55666">
    <property type="entry name" value="Ribonuclease PH domain 2-like"/>
    <property type="match status" value="2"/>
</dbReference>
<dbReference type="SUPFAM" id="SSF54211">
    <property type="entry name" value="Ribosomal protein S5 domain 2-like"/>
    <property type="match status" value="2"/>
</dbReference>
<dbReference type="PROSITE" id="PS50084">
    <property type="entry name" value="KH_TYPE_1"/>
    <property type="match status" value="1"/>
</dbReference>
<dbReference type="PROSITE" id="PS50126">
    <property type="entry name" value="S1"/>
    <property type="match status" value="1"/>
</dbReference>
<name>PNP_STRP3</name>